<dbReference type="EMBL" id="CP000743">
    <property type="protein sequence ID" value="ABR56962.1"/>
    <property type="molecule type" value="Genomic_DNA"/>
</dbReference>
<dbReference type="RefSeq" id="WP_011974094.1">
    <property type="nucleotide sequence ID" value="NC_009635.1"/>
</dbReference>
<dbReference type="SMR" id="A6UWU0"/>
<dbReference type="STRING" id="419665.Maeo_1386"/>
<dbReference type="GeneID" id="5326924"/>
<dbReference type="KEGG" id="mae:Maeo_1386"/>
<dbReference type="eggNOG" id="arCOG01988">
    <property type="taxonomic scope" value="Archaea"/>
</dbReference>
<dbReference type="HOGENOM" id="CLU_165896_0_0_2"/>
<dbReference type="OrthoDB" id="84643at2157"/>
<dbReference type="Proteomes" id="UP000001106">
    <property type="component" value="Chromosome"/>
</dbReference>
<dbReference type="GO" id="GO:0003746">
    <property type="term" value="F:translation elongation factor activity"/>
    <property type="evidence" value="ECO:0007669"/>
    <property type="project" value="UniProtKB-UniRule"/>
</dbReference>
<dbReference type="Gene3D" id="3.30.70.60">
    <property type="match status" value="1"/>
</dbReference>
<dbReference type="HAMAP" id="MF_00043">
    <property type="entry name" value="EF1_beta"/>
    <property type="match status" value="1"/>
</dbReference>
<dbReference type="InterPro" id="IPR036219">
    <property type="entry name" value="eEF-1beta-like_sf"/>
</dbReference>
<dbReference type="InterPro" id="IPR014038">
    <property type="entry name" value="EF1B_bsu/dsu_GNE"/>
</dbReference>
<dbReference type="InterPro" id="IPR014717">
    <property type="entry name" value="Transl_elong_EF1B/ribsomal_bS6"/>
</dbReference>
<dbReference type="InterPro" id="IPR004542">
    <property type="entry name" value="Transl_elong_EF1B_B_arc"/>
</dbReference>
<dbReference type="NCBIfam" id="TIGR00489">
    <property type="entry name" value="aEF-1_beta"/>
    <property type="match status" value="1"/>
</dbReference>
<dbReference type="NCBIfam" id="NF001670">
    <property type="entry name" value="PRK00435.1"/>
    <property type="match status" value="1"/>
</dbReference>
<dbReference type="PANTHER" id="PTHR39647">
    <property type="entry name" value="ELONGATION FACTOR 1-BETA"/>
    <property type="match status" value="1"/>
</dbReference>
<dbReference type="PANTHER" id="PTHR39647:SF1">
    <property type="entry name" value="ELONGATION FACTOR 1-BETA"/>
    <property type="match status" value="1"/>
</dbReference>
<dbReference type="Pfam" id="PF00736">
    <property type="entry name" value="EF1_GNE"/>
    <property type="match status" value="1"/>
</dbReference>
<dbReference type="PIRSF" id="PIRSF006521">
    <property type="entry name" value="Transl_elong_EF1B_B_arc"/>
    <property type="match status" value="1"/>
</dbReference>
<dbReference type="SMART" id="SM00888">
    <property type="entry name" value="EF1_GNE"/>
    <property type="match status" value="1"/>
</dbReference>
<dbReference type="SUPFAM" id="SSF54984">
    <property type="entry name" value="eEF-1beta-like"/>
    <property type="match status" value="1"/>
</dbReference>
<protein>
    <recommendedName>
        <fullName evidence="1">Elongation factor 1-beta</fullName>
        <shortName evidence="1">EF-1-beta</shortName>
    </recommendedName>
    <alternativeName>
        <fullName evidence="1">aEF-1beta</fullName>
    </alternativeName>
</protein>
<accession>A6UWU0</accession>
<organism>
    <name type="scientific">Methanococcus aeolicus (strain ATCC BAA-1280 / DSM 17508 / OCM 812 / Nankai-3)</name>
    <dbReference type="NCBI Taxonomy" id="419665"/>
    <lineage>
        <taxon>Archaea</taxon>
        <taxon>Methanobacteriati</taxon>
        <taxon>Methanobacteriota</taxon>
        <taxon>Methanomada group</taxon>
        <taxon>Methanococci</taxon>
        <taxon>Methanococcales</taxon>
        <taxon>Methanococcaceae</taxon>
        <taxon>Methanococcus</taxon>
    </lineage>
</organism>
<sequence length="89" mass="9794">MGIVMVKLKVMPVSPEVNKDELSAKIKETVESMDIICRNIEVEPLAFGLYAVFPLIEMEEKEGGTEPVEEALANLDDVESVESVEVSLV</sequence>
<evidence type="ECO:0000255" key="1">
    <source>
        <dbReference type="HAMAP-Rule" id="MF_00043"/>
    </source>
</evidence>
<gene>
    <name evidence="1" type="primary">ef1b</name>
    <name type="ordered locus">Maeo_1386</name>
</gene>
<name>EF1B_META3</name>
<comment type="function">
    <text evidence="1">Promotes the exchange of GDP for GTP in EF-1-alpha/GDP, thus allowing the regeneration of EF-1-alpha/GTP that could then be used to form the ternary complex EF-1-alpha/GTP/AAtRNA.</text>
</comment>
<comment type="similarity">
    <text evidence="1">Belongs to the EF-1-beta/EF-1-delta family.</text>
</comment>
<reference key="1">
    <citation type="submission" date="2007-06" db="EMBL/GenBank/DDBJ databases">
        <title>Complete sequence of Methanococcus aeolicus Nankai-3.</title>
        <authorList>
            <consortium name="US DOE Joint Genome Institute"/>
            <person name="Copeland A."/>
            <person name="Lucas S."/>
            <person name="Lapidus A."/>
            <person name="Barry K."/>
            <person name="Glavina del Rio T."/>
            <person name="Dalin E."/>
            <person name="Tice H."/>
            <person name="Pitluck S."/>
            <person name="Chain P."/>
            <person name="Malfatti S."/>
            <person name="Shin M."/>
            <person name="Vergez L."/>
            <person name="Schmutz J."/>
            <person name="Larimer F."/>
            <person name="Land M."/>
            <person name="Hauser L."/>
            <person name="Kyrpides N."/>
            <person name="Lykidis A."/>
            <person name="Sieprawska-Lupa M."/>
            <person name="Whitman W.B."/>
            <person name="Richardson P."/>
        </authorList>
    </citation>
    <scope>NUCLEOTIDE SEQUENCE [LARGE SCALE GENOMIC DNA]</scope>
    <source>
        <strain>ATCC BAA-1280 / DSM 17508 / OCM 812 / Nankai-3</strain>
    </source>
</reference>
<keyword id="KW-0251">Elongation factor</keyword>
<keyword id="KW-0648">Protein biosynthesis</keyword>
<proteinExistence type="inferred from homology"/>
<feature type="chain" id="PRO_0000366425" description="Elongation factor 1-beta">
    <location>
        <begin position="1"/>
        <end position="89"/>
    </location>
</feature>